<name>Y2179_THEKO</name>
<gene>
    <name type="ordered locus">TK2179</name>
</gene>
<proteinExistence type="inferred from homology"/>
<evidence type="ECO:0000305" key="1"/>
<dbReference type="EMBL" id="AP006878">
    <property type="protein sequence ID" value="BAD86368.1"/>
    <property type="molecule type" value="Genomic_DNA"/>
</dbReference>
<dbReference type="RefSeq" id="WP_011251129.1">
    <property type="nucleotide sequence ID" value="NC_006624.1"/>
</dbReference>
<dbReference type="SMR" id="Q5JHL2"/>
<dbReference type="STRING" id="69014.TK2179"/>
<dbReference type="EnsemblBacteria" id="BAD86368">
    <property type="protein sequence ID" value="BAD86368"/>
    <property type="gene ID" value="TK2179"/>
</dbReference>
<dbReference type="GeneID" id="78448719"/>
<dbReference type="KEGG" id="tko:TK2179"/>
<dbReference type="PATRIC" id="fig|69014.16.peg.2134"/>
<dbReference type="eggNOG" id="arCOG01982">
    <property type="taxonomic scope" value="Archaea"/>
</dbReference>
<dbReference type="HOGENOM" id="CLU_075239_1_0_2"/>
<dbReference type="InParanoid" id="Q5JHL2"/>
<dbReference type="OrthoDB" id="38543at2157"/>
<dbReference type="PhylomeDB" id="Q5JHL2"/>
<dbReference type="Proteomes" id="UP000000536">
    <property type="component" value="Chromosome"/>
</dbReference>
<dbReference type="CDD" id="cd04722">
    <property type="entry name" value="TIM_phosphate_binding"/>
    <property type="match status" value="1"/>
</dbReference>
<dbReference type="InterPro" id="IPR005137">
    <property type="entry name" value="BtpA"/>
</dbReference>
<dbReference type="InterPro" id="IPR011060">
    <property type="entry name" value="RibuloseP-bd_barrel"/>
</dbReference>
<dbReference type="NCBIfam" id="TIGR00259">
    <property type="entry name" value="thylakoid_BtpA"/>
    <property type="match status" value="1"/>
</dbReference>
<dbReference type="PANTHER" id="PTHR21381:SF3">
    <property type="entry name" value="SGC REGION PROTEIN SGCQ-RELATED"/>
    <property type="match status" value="1"/>
</dbReference>
<dbReference type="PANTHER" id="PTHR21381">
    <property type="entry name" value="ZGC:162297"/>
    <property type="match status" value="1"/>
</dbReference>
<dbReference type="Pfam" id="PF03437">
    <property type="entry name" value="BtpA"/>
    <property type="match status" value="1"/>
</dbReference>
<dbReference type="PIRSF" id="PIRSF005956">
    <property type="entry name" value="BtpA"/>
    <property type="match status" value="1"/>
</dbReference>
<dbReference type="SUPFAM" id="SSF51366">
    <property type="entry name" value="Ribulose-phoshate binding barrel"/>
    <property type="match status" value="1"/>
</dbReference>
<protein>
    <recommendedName>
        <fullName>Uncharacterized protein TK2179</fullName>
    </recommendedName>
</protein>
<comment type="similarity">
    <text evidence="1">Belongs to the BtpA family.</text>
</comment>
<organism>
    <name type="scientific">Thermococcus kodakarensis (strain ATCC BAA-918 / JCM 12380 / KOD1)</name>
    <name type="common">Pyrococcus kodakaraensis (strain KOD1)</name>
    <dbReference type="NCBI Taxonomy" id="69014"/>
    <lineage>
        <taxon>Archaea</taxon>
        <taxon>Methanobacteriati</taxon>
        <taxon>Methanobacteriota</taxon>
        <taxon>Thermococci</taxon>
        <taxon>Thermococcales</taxon>
        <taxon>Thermococcaceae</taxon>
        <taxon>Thermococcus</taxon>
    </lineage>
</organism>
<keyword id="KW-1185">Reference proteome</keyword>
<sequence length="261" mass="28485">MDFERKPLIGMVHLKPLPGSYLYNGDFDSVIEAALRDAVTLEEAGFDAVMVENFGDVPFPKYADKTTVASLAVVAKAIRDEVSLPLGVNVLRNDGIAAYSIAYAVKADFIRVNVLSGVAYTDQGIIEGIAHELAMLRKRLPSEIKVFADVHVKHAVHFGDFEDAFLDTVERGLADAVVVSGKATGRPVDVDKLALAKEISPVPVIVGSGTSYDNLPELWKYADGFIVGTWIKRDGRVENEVSLERARKLVELAKELRQSSI</sequence>
<reference key="1">
    <citation type="journal article" date="2005" name="Genome Res.">
        <title>Complete genome sequence of the hyperthermophilic archaeon Thermococcus kodakaraensis KOD1 and comparison with Pyrococcus genomes.</title>
        <authorList>
            <person name="Fukui T."/>
            <person name="Atomi H."/>
            <person name="Kanai T."/>
            <person name="Matsumi R."/>
            <person name="Fujiwara S."/>
            <person name="Imanaka T."/>
        </authorList>
    </citation>
    <scope>NUCLEOTIDE SEQUENCE [LARGE SCALE GENOMIC DNA]</scope>
    <source>
        <strain>ATCC BAA-918 / JCM 12380 / KOD1</strain>
    </source>
</reference>
<accession>Q5JHL2</accession>
<feature type="chain" id="PRO_0000159335" description="Uncharacterized protein TK2179">
    <location>
        <begin position="1"/>
        <end position="261"/>
    </location>
</feature>